<reference key="1">
    <citation type="journal article" date="2008" name="Infect. Immun.">
        <title>Genomic comparison of virulent Rickettsia rickettsii Sheila Smith and avirulent Rickettsia rickettsii Iowa.</title>
        <authorList>
            <person name="Ellison D.W."/>
            <person name="Clark T.R."/>
            <person name="Sturdevant D.E."/>
            <person name="Virtaneva K."/>
            <person name="Porcella S.F."/>
            <person name="Hackstadt T."/>
        </authorList>
    </citation>
    <scope>NUCLEOTIDE SEQUENCE [LARGE SCALE GENOMIC DNA]</scope>
    <source>
        <strain>Iowa</strain>
    </source>
</reference>
<keyword id="KW-0963">Cytoplasm</keyword>
<keyword id="KW-0255">Endonuclease</keyword>
<keyword id="KW-0378">Hydrolase</keyword>
<keyword id="KW-0464">Manganese</keyword>
<keyword id="KW-0479">Metal-binding</keyword>
<keyword id="KW-0540">Nuclease</keyword>
<proteinExistence type="inferred from homology"/>
<gene>
    <name evidence="1" type="primary">rnhB</name>
    <name type="ordered locus">RrIowa_0321</name>
</gene>
<feature type="chain" id="PRO_1000074929" description="Ribonuclease HII">
    <location>
        <begin position="1"/>
        <end position="193"/>
    </location>
</feature>
<feature type="domain" description="RNase H type-2" evidence="2">
    <location>
        <begin position="15"/>
        <end position="193"/>
    </location>
</feature>
<feature type="binding site" evidence="1">
    <location>
        <position position="21"/>
    </location>
    <ligand>
        <name>a divalent metal cation</name>
        <dbReference type="ChEBI" id="CHEBI:60240"/>
    </ligand>
</feature>
<feature type="binding site" evidence="1">
    <location>
        <position position="22"/>
    </location>
    <ligand>
        <name>a divalent metal cation</name>
        <dbReference type="ChEBI" id="CHEBI:60240"/>
    </ligand>
</feature>
<feature type="binding site" evidence="1">
    <location>
        <position position="112"/>
    </location>
    <ligand>
        <name>a divalent metal cation</name>
        <dbReference type="ChEBI" id="CHEBI:60240"/>
    </ligand>
</feature>
<dbReference type="EC" id="3.1.26.4" evidence="1"/>
<dbReference type="EMBL" id="CP000766">
    <property type="protein sequence ID" value="ABY72225.1"/>
    <property type="molecule type" value="Genomic_DNA"/>
</dbReference>
<dbReference type="RefSeq" id="WP_012150481.1">
    <property type="nucleotide sequence ID" value="NC_010263.3"/>
</dbReference>
<dbReference type="SMR" id="B0BWJ9"/>
<dbReference type="KEGG" id="rrj:RrIowa_0321"/>
<dbReference type="eggNOG" id="COG0164">
    <property type="taxonomic scope" value="Bacteria"/>
</dbReference>
<dbReference type="HOGENOM" id="CLU_036532_3_1_5"/>
<dbReference type="Proteomes" id="UP000000796">
    <property type="component" value="Chromosome"/>
</dbReference>
<dbReference type="GO" id="GO:0005737">
    <property type="term" value="C:cytoplasm"/>
    <property type="evidence" value="ECO:0007669"/>
    <property type="project" value="UniProtKB-SubCell"/>
</dbReference>
<dbReference type="GO" id="GO:0032299">
    <property type="term" value="C:ribonuclease H2 complex"/>
    <property type="evidence" value="ECO:0007669"/>
    <property type="project" value="TreeGrafter"/>
</dbReference>
<dbReference type="GO" id="GO:0030145">
    <property type="term" value="F:manganese ion binding"/>
    <property type="evidence" value="ECO:0007669"/>
    <property type="project" value="UniProtKB-UniRule"/>
</dbReference>
<dbReference type="GO" id="GO:0003723">
    <property type="term" value="F:RNA binding"/>
    <property type="evidence" value="ECO:0007669"/>
    <property type="project" value="InterPro"/>
</dbReference>
<dbReference type="GO" id="GO:0004523">
    <property type="term" value="F:RNA-DNA hybrid ribonuclease activity"/>
    <property type="evidence" value="ECO:0007669"/>
    <property type="project" value="UniProtKB-UniRule"/>
</dbReference>
<dbReference type="GO" id="GO:0043137">
    <property type="term" value="P:DNA replication, removal of RNA primer"/>
    <property type="evidence" value="ECO:0007669"/>
    <property type="project" value="TreeGrafter"/>
</dbReference>
<dbReference type="GO" id="GO:0006298">
    <property type="term" value="P:mismatch repair"/>
    <property type="evidence" value="ECO:0007669"/>
    <property type="project" value="TreeGrafter"/>
</dbReference>
<dbReference type="CDD" id="cd07182">
    <property type="entry name" value="RNase_HII_bacteria_HII_like"/>
    <property type="match status" value="1"/>
</dbReference>
<dbReference type="Gene3D" id="3.30.420.10">
    <property type="entry name" value="Ribonuclease H-like superfamily/Ribonuclease H"/>
    <property type="match status" value="1"/>
</dbReference>
<dbReference type="HAMAP" id="MF_00052_B">
    <property type="entry name" value="RNase_HII_B"/>
    <property type="match status" value="1"/>
</dbReference>
<dbReference type="InterPro" id="IPR022898">
    <property type="entry name" value="RNase_HII"/>
</dbReference>
<dbReference type="InterPro" id="IPR001352">
    <property type="entry name" value="RNase_HII/HIII"/>
</dbReference>
<dbReference type="InterPro" id="IPR024567">
    <property type="entry name" value="RNase_HII/HIII_dom"/>
</dbReference>
<dbReference type="InterPro" id="IPR012337">
    <property type="entry name" value="RNaseH-like_sf"/>
</dbReference>
<dbReference type="InterPro" id="IPR036397">
    <property type="entry name" value="RNaseH_sf"/>
</dbReference>
<dbReference type="NCBIfam" id="NF000594">
    <property type="entry name" value="PRK00015.1-1"/>
    <property type="match status" value="1"/>
</dbReference>
<dbReference type="NCBIfam" id="NF000595">
    <property type="entry name" value="PRK00015.1-3"/>
    <property type="match status" value="1"/>
</dbReference>
<dbReference type="PANTHER" id="PTHR10954">
    <property type="entry name" value="RIBONUCLEASE H2 SUBUNIT A"/>
    <property type="match status" value="1"/>
</dbReference>
<dbReference type="PANTHER" id="PTHR10954:SF18">
    <property type="entry name" value="RIBONUCLEASE HII"/>
    <property type="match status" value="1"/>
</dbReference>
<dbReference type="Pfam" id="PF01351">
    <property type="entry name" value="RNase_HII"/>
    <property type="match status" value="1"/>
</dbReference>
<dbReference type="SUPFAM" id="SSF53098">
    <property type="entry name" value="Ribonuclease H-like"/>
    <property type="match status" value="1"/>
</dbReference>
<dbReference type="PROSITE" id="PS51975">
    <property type="entry name" value="RNASE_H_2"/>
    <property type="match status" value="1"/>
</dbReference>
<organism>
    <name type="scientific">Rickettsia rickettsii (strain Iowa)</name>
    <dbReference type="NCBI Taxonomy" id="452659"/>
    <lineage>
        <taxon>Bacteria</taxon>
        <taxon>Pseudomonadati</taxon>
        <taxon>Pseudomonadota</taxon>
        <taxon>Alphaproteobacteria</taxon>
        <taxon>Rickettsiales</taxon>
        <taxon>Rickettsiaceae</taxon>
        <taxon>Rickettsieae</taxon>
        <taxon>Rickettsia</taxon>
        <taxon>spotted fever group</taxon>
    </lineage>
</organism>
<sequence>MEVDLLHFEKKYHNCIVAGIDEAGRGPLAGPVVASAVIVDNANIITGIKDSKKLSKKKRELLYEQITSNYAWATAIISHTEIDDINILEATKKACSIAVANLSLEPEIVLVDGNMQFKDERFVSIINGDNLSLSIAAASIIAKVTRDRLMLDLSAEFPQYLWHKNSGYGTKEHIEAINIHGLSPYHRRSFRCC</sequence>
<name>RNH2_RICRO</name>
<protein>
    <recommendedName>
        <fullName evidence="1">Ribonuclease HII</fullName>
        <shortName evidence="1">RNase HII</shortName>
        <ecNumber evidence="1">3.1.26.4</ecNumber>
    </recommendedName>
</protein>
<evidence type="ECO:0000255" key="1">
    <source>
        <dbReference type="HAMAP-Rule" id="MF_00052"/>
    </source>
</evidence>
<evidence type="ECO:0000255" key="2">
    <source>
        <dbReference type="PROSITE-ProRule" id="PRU01319"/>
    </source>
</evidence>
<comment type="function">
    <text evidence="1">Endonuclease that specifically degrades the RNA of RNA-DNA hybrids.</text>
</comment>
<comment type="catalytic activity">
    <reaction evidence="1">
        <text>Endonucleolytic cleavage to 5'-phosphomonoester.</text>
        <dbReference type="EC" id="3.1.26.4"/>
    </reaction>
</comment>
<comment type="cofactor">
    <cofactor evidence="1">
        <name>Mn(2+)</name>
        <dbReference type="ChEBI" id="CHEBI:29035"/>
    </cofactor>
    <cofactor evidence="1">
        <name>Mg(2+)</name>
        <dbReference type="ChEBI" id="CHEBI:18420"/>
    </cofactor>
    <text evidence="1">Manganese or magnesium. Binds 1 divalent metal ion per monomer in the absence of substrate. May bind a second metal ion after substrate binding.</text>
</comment>
<comment type="subcellular location">
    <subcellularLocation>
        <location evidence="1">Cytoplasm</location>
    </subcellularLocation>
</comment>
<comment type="similarity">
    <text evidence="1">Belongs to the RNase HII family.</text>
</comment>
<accession>B0BWJ9</accession>